<gene>
    <name type="primary">SAMDC</name>
</gene>
<proteinExistence type="evidence at transcript level"/>
<evidence type="ECO:0000250" key="1"/>
<evidence type="ECO:0000305" key="2"/>
<keyword id="KW-0068">Autocatalytic cleavage</keyword>
<keyword id="KW-0210">Decarboxylase</keyword>
<keyword id="KW-0456">Lyase</keyword>
<keyword id="KW-0620">Polyamine biosynthesis</keyword>
<keyword id="KW-0670">Pyruvate</keyword>
<keyword id="KW-0949">S-adenosyl-L-methionine</keyword>
<keyword id="KW-0704">Schiff base</keyword>
<keyword id="KW-0745">Spermidine biosynthesis</keyword>
<keyword id="KW-0865">Zymogen</keyword>
<accession>Q9M6K1</accession>
<organism>
    <name type="scientific">Ipomoea batatas</name>
    <name type="common">Sweet potato</name>
    <name type="synonym">Convolvulus batatas</name>
    <dbReference type="NCBI Taxonomy" id="4120"/>
    <lineage>
        <taxon>Eukaryota</taxon>
        <taxon>Viridiplantae</taxon>
        <taxon>Streptophyta</taxon>
        <taxon>Embryophyta</taxon>
        <taxon>Tracheophyta</taxon>
        <taxon>Spermatophyta</taxon>
        <taxon>Magnoliopsida</taxon>
        <taxon>eudicotyledons</taxon>
        <taxon>Gunneridae</taxon>
        <taxon>Pentapetalae</taxon>
        <taxon>asterids</taxon>
        <taxon>lamiids</taxon>
        <taxon>Solanales</taxon>
        <taxon>Convolvulaceae</taxon>
        <taxon>Ipomoeeae</taxon>
        <taxon>Ipomoea</taxon>
    </lineage>
</organism>
<comment type="catalytic activity">
    <reaction>
        <text>S-adenosyl-L-methionine + H(+) = S-adenosyl 3-(methylsulfanyl)propylamine + CO2</text>
        <dbReference type="Rhea" id="RHEA:15981"/>
        <dbReference type="ChEBI" id="CHEBI:15378"/>
        <dbReference type="ChEBI" id="CHEBI:16526"/>
        <dbReference type="ChEBI" id="CHEBI:57443"/>
        <dbReference type="ChEBI" id="CHEBI:59789"/>
        <dbReference type="EC" id="4.1.1.50"/>
    </reaction>
</comment>
<comment type="cofactor">
    <cofactor evidence="1">
        <name>pyruvate</name>
        <dbReference type="ChEBI" id="CHEBI:15361"/>
    </cofactor>
    <text evidence="1">Binds 1 pyruvoyl group covalently per subunit.</text>
</comment>
<comment type="pathway">
    <text>Amine and polyamine biosynthesis; S-adenosylmethioninamine biosynthesis; S-adenosylmethioninamine from S-adenosyl-L-methionine: step 1/1.</text>
</comment>
<comment type="PTM">
    <text evidence="1">Is synthesized initially as an inactive proenzyme. Formation of the active enzyme involves a self-maturation process in which the active site pyruvoyl group is generated from an internal serine residue via an autocatalytic post-translational modification. Two non-identical subunits are generated from the proenzyme in this reaction, and the pyruvate is formed at the N-terminus of the alpha chain, which is derived from the carboxyl end of the proenzyme. The post-translation cleavage follows an unusual pathway, termed non-hydrolytic serinolysis, in which the side chain hydroxyl group of the serine supplies its oxygen atom to form the C-terminus of the beta chain, while the remainder of the serine residue undergoes an oxidative deamination to produce ammonia and the pyruvoyl group blocking the N-terminus of the alpha chain (By similarity).</text>
</comment>
<comment type="similarity">
    <text evidence="2">Belongs to the eukaryotic AdoMetDC family.</text>
</comment>
<feature type="chain" id="PRO_0000030011" description="S-adenosylmethionine decarboxylase beta chain" evidence="1">
    <location>
        <begin position="1"/>
        <end position="70"/>
    </location>
</feature>
<feature type="chain" id="PRO_0000030012" description="S-adenosylmethionine decarboxylase alpha chain" evidence="1">
    <location>
        <begin position="71"/>
        <end position="362"/>
    </location>
</feature>
<feature type="active site" evidence="1">
    <location>
        <position position="11"/>
    </location>
</feature>
<feature type="active site" evidence="1">
    <location>
        <position position="14"/>
    </location>
</feature>
<feature type="active site" description="Schiff-base intermediate with substrate; via pyruvic acid" evidence="1">
    <location>
        <position position="71"/>
    </location>
</feature>
<feature type="active site" description="Proton donor; for catalytic activity" evidence="1">
    <location>
        <position position="85"/>
    </location>
</feature>
<feature type="active site" description="Proton acceptor; for processing activity" evidence="1">
    <location>
        <position position="234"/>
    </location>
</feature>
<feature type="active site" description="Proton acceptor; for processing activity" evidence="1">
    <location>
        <position position="247"/>
    </location>
</feature>
<feature type="site" description="Cleavage (non-hydrolytic); by autolysis" evidence="1">
    <location>
        <begin position="70"/>
        <end position="71"/>
    </location>
</feature>
<feature type="modified residue" description="Pyruvic acid (Ser); by autocatalysis" evidence="1">
    <location>
        <position position="71"/>
    </location>
</feature>
<dbReference type="EC" id="4.1.1.50"/>
<dbReference type="EMBL" id="AF188998">
    <property type="protein sequence ID" value="AAF71199.1"/>
    <property type="molecule type" value="mRNA"/>
</dbReference>
<dbReference type="SMR" id="Q9M6K1"/>
<dbReference type="UniPathway" id="UPA00331">
    <property type="reaction ID" value="UER00451"/>
</dbReference>
<dbReference type="GO" id="GO:0005829">
    <property type="term" value="C:cytosol"/>
    <property type="evidence" value="ECO:0007669"/>
    <property type="project" value="TreeGrafter"/>
</dbReference>
<dbReference type="GO" id="GO:0004014">
    <property type="term" value="F:adenosylmethionine decarboxylase activity"/>
    <property type="evidence" value="ECO:0007669"/>
    <property type="project" value="UniProtKB-EC"/>
</dbReference>
<dbReference type="GO" id="GO:0008295">
    <property type="term" value="P:spermidine biosynthetic process"/>
    <property type="evidence" value="ECO:0007669"/>
    <property type="project" value="UniProtKB-KW"/>
</dbReference>
<dbReference type="GO" id="GO:0006597">
    <property type="term" value="P:spermine biosynthetic process"/>
    <property type="evidence" value="ECO:0007669"/>
    <property type="project" value="InterPro"/>
</dbReference>
<dbReference type="FunFam" id="3.30.360.50:FF:000001">
    <property type="entry name" value="S-adenosylmethionine decarboxylase proenzyme"/>
    <property type="match status" value="1"/>
</dbReference>
<dbReference type="FunFam" id="3.60.90.10:FF:000002">
    <property type="entry name" value="S-adenosylmethionine decarboxylase proenzyme"/>
    <property type="match status" value="1"/>
</dbReference>
<dbReference type="Gene3D" id="3.30.360.50">
    <property type="entry name" value="S-adenosylmethionine decarboxylase"/>
    <property type="match status" value="1"/>
</dbReference>
<dbReference type="Gene3D" id="3.60.90.10">
    <property type="entry name" value="S-adenosylmethionine decarboxylase"/>
    <property type="match status" value="1"/>
</dbReference>
<dbReference type="InterPro" id="IPR048283">
    <property type="entry name" value="AdoMetDC-like"/>
</dbReference>
<dbReference type="InterPro" id="IPR001985">
    <property type="entry name" value="S-AdoMet_decarboxylase_euk"/>
</dbReference>
<dbReference type="InterPro" id="IPR016067">
    <property type="entry name" value="S-AdoMet_deCO2ase_core"/>
</dbReference>
<dbReference type="InterPro" id="IPR018166">
    <property type="entry name" value="S-AdoMet_deCO2ase_CS"/>
</dbReference>
<dbReference type="NCBIfam" id="TIGR00535">
    <property type="entry name" value="SAM_DCase"/>
    <property type="match status" value="1"/>
</dbReference>
<dbReference type="PANTHER" id="PTHR11570">
    <property type="entry name" value="S-ADENOSYLMETHIONINE DECARBOXYLASE"/>
    <property type="match status" value="1"/>
</dbReference>
<dbReference type="PANTHER" id="PTHR11570:SF36">
    <property type="entry name" value="S-ADENOSYLMETHIONINE DECARBOXYLASE PROENZYME"/>
    <property type="match status" value="1"/>
</dbReference>
<dbReference type="Pfam" id="PF01536">
    <property type="entry name" value="SAM_decarbox"/>
    <property type="match status" value="1"/>
</dbReference>
<dbReference type="PIRSF" id="PIRSF001355">
    <property type="entry name" value="S-AdenosylMet_decarboxylase"/>
    <property type="match status" value="1"/>
</dbReference>
<dbReference type="SUPFAM" id="SSF56276">
    <property type="entry name" value="S-adenosylmethionine decarboxylase"/>
    <property type="match status" value="1"/>
</dbReference>
<dbReference type="PROSITE" id="PS01336">
    <property type="entry name" value="ADOMETDC"/>
    <property type="match status" value="1"/>
</dbReference>
<name>DCAM_IPOBA</name>
<sequence length="362" mass="39557">MALSTSAIGFEGYENRLEISFFEAGIFSDPEGRGLRALSKEQLDKVLKPAECTIVSSLSNNEVDSYVLSESSLFVYPYKIIIKTCGTTKLLLSIPPILELADGLSLKVKSVKYTRGSFNFPEVQPYPHRNFSEEVAILDSYFGKLSTGSKAYVMGGAGKQQQWHVYSASAESAENTFPIYTLEMCMTGLDKKSASVFFKTQSSSAAVMTDASGIRKILPGSEICDFDFEPCGYSMNAVEGGAISPIHVTPEDGFSYASFEAMGYDFKDVNLDALIQRVLSCFQPAEFSVALHCDSIGEKLDSVFKLDVKGYACGERSYEGLNKGGSIMYCGFTSTGSCGSPRSTLLCCWSENEDEEGEKKHF</sequence>
<reference key="1">
    <citation type="online journal article" date="2000" name="Plant Gene Register">
        <title>Cloning and characterization of a sweet potato leaf cDNA encoding S-adenosylmethionine decarboxylase.</title>
        <authorList>
            <person name="Chiang W.J."/>
            <person name="Chen S.C.G."/>
        </authorList>
        <locator>PGR00-050</locator>
    </citation>
    <scope>NUCLEOTIDE SEQUENCE [MRNA]</scope>
    <source>
        <strain>cv. Tainong 57</strain>
        <tissue>Leaf</tissue>
    </source>
</reference>
<protein>
    <recommendedName>
        <fullName>S-adenosylmethionine decarboxylase proenzyme</fullName>
        <shortName>AdoMetDC</shortName>
        <shortName>SAMDC</shortName>
        <ecNumber>4.1.1.50</ecNumber>
    </recommendedName>
    <component>
        <recommendedName>
            <fullName>S-adenosylmethionine decarboxylase alpha chain</fullName>
        </recommendedName>
    </component>
    <component>
        <recommendedName>
            <fullName>S-adenosylmethionine decarboxylase beta chain</fullName>
        </recommendedName>
    </component>
</protein>